<feature type="chain" id="PRO_0000257586" description="Putative pre-16S rRNA nuclease">
    <location>
        <begin position="1"/>
        <end position="143"/>
    </location>
</feature>
<comment type="function">
    <text evidence="1">Could be a nuclease involved in processing of the 5'-end of pre-16S rRNA.</text>
</comment>
<comment type="subcellular location">
    <subcellularLocation>
        <location evidence="1">Cytoplasm</location>
    </subcellularLocation>
</comment>
<comment type="similarity">
    <text evidence="1">Belongs to the YqgF nuclease family.</text>
</comment>
<sequence>MSTLSSEARVVGIDVGTKRVGVAVADPLRLFAQPHGTYAPDEALDVLQALRDADGIARIVVGWPLTEEGTAEEATEMVEAYVERIREALGTVEVAREDERYTSEIAKDLLREAGVSQPGRYDKGRVDAAAAAVILQGFLNRTG</sequence>
<reference key="1">
    <citation type="journal article" date="2005" name="Proc. Natl. Acad. Sci. U.S.A.">
        <title>The genome of Salinibacter ruber: convergence and gene exchange among hyperhalophilic bacteria and archaea.</title>
        <authorList>
            <person name="Mongodin E.F."/>
            <person name="Nelson K.E."/>
            <person name="Daugherty S."/>
            <person name="DeBoy R.T."/>
            <person name="Wister J."/>
            <person name="Khouri H."/>
            <person name="Weidman J."/>
            <person name="Walsh D.A."/>
            <person name="Papke R.T."/>
            <person name="Sanchez Perez G."/>
            <person name="Sharma A.K."/>
            <person name="Nesbo C.L."/>
            <person name="MacLeod D."/>
            <person name="Bapteste E."/>
            <person name="Doolittle W.F."/>
            <person name="Charlebois R.L."/>
            <person name="Legault B."/>
            <person name="Rodriguez-Valera F."/>
        </authorList>
    </citation>
    <scope>NUCLEOTIDE SEQUENCE [LARGE SCALE GENOMIC DNA]</scope>
    <source>
        <strain>DSM 13855 / CECT 5946 / M31</strain>
    </source>
</reference>
<name>YQGF_SALRD</name>
<protein>
    <recommendedName>
        <fullName evidence="1">Putative pre-16S rRNA nuclease</fullName>
        <ecNumber evidence="1">3.1.-.-</ecNumber>
    </recommendedName>
</protein>
<organism>
    <name type="scientific">Salinibacter ruber (strain DSM 13855 / M31)</name>
    <dbReference type="NCBI Taxonomy" id="309807"/>
    <lineage>
        <taxon>Bacteria</taxon>
        <taxon>Pseudomonadati</taxon>
        <taxon>Rhodothermota</taxon>
        <taxon>Rhodothermia</taxon>
        <taxon>Rhodothermales</taxon>
        <taxon>Salinibacteraceae</taxon>
        <taxon>Salinibacter</taxon>
    </lineage>
</organism>
<accession>Q2S3N5</accession>
<keyword id="KW-0963">Cytoplasm</keyword>
<keyword id="KW-0378">Hydrolase</keyword>
<keyword id="KW-0540">Nuclease</keyword>
<keyword id="KW-1185">Reference proteome</keyword>
<keyword id="KW-0690">Ribosome biogenesis</keyword>
<proteinExistence type="inferred from homology"/>
<gene>
    <name type="ordered locus">SRU_1064</name>
</gene>
<evidence type="ECO:0000255" key="1">
    <source>
        <dbReference type="HAMAP-Rule" id="MF_00651"/>
    </source>
</evidence>
<dbReference type="EC" id="3.1.-.-" evidence="1"/>
<dbReference type="EMBL" id="CP000159">
    <property type="protein sequence ID" value="ABC43771.1"/>
    <property type="molecule type" value="Genomic_DNA"/>
</dbReference>
<dbReference type="RefSeq" id="YP_445196.1">
    <property type="nucleotide sequence ID" value="NC_007677.1"/>
</dbReference>
<dbReference type="SMR" id="Q2S3N5"/>
<dbReference type="STRING" id="309807.SRU_1064"/>
<dbReference type="EnsemblBacteria" id="ABC43771">
    <property type="protein sequence ID" value="ABC43771"/>
    <property type="gene ID" value="SRU_1064"/>
</dbReference>
<dbReference type="KEGG" id="sru:SRU_1064"/>
<dbReference type="eggNOG" id="COG0816">
    <property type="taxonomic scope" value="Bacteria"/>
</dbReference>
<dbReference type="HOGENOM" id="CLU_098240_2_1_10"/>
<dbReference type="OrthoDB" id="9796140at2"/>
<dbReference type="Proteomes" id="UP000008674">
    <property type="component" value="Chromosome"/>
</dbReference>
<dbReference type="GO" id="GO:0005829">
    <property type="term" value="C:cytosol"/>
    <property type="evidence" value="ECO:0007669"/>
    <property type="project" value="TreeGrafter"/>
</dbReference>
<dbReference type="GO" id="GO:0004518">
    <property type="term" value="F:nuclease activity"/>
    <property type="evidence" value="ECO:0007669"/>
    <property type="project" value="UniProtKB-KW"/>
</dbReference>
<dbReference type="GO" id="GO:0000967">
    <property type="term" value="P:rRNA 5'-end processing"/>
    <property type="evidence" value="ECO:0007669"/>
    <property type="project" value="UniProtKB-UniRule"/>
</dbReference>
<dbReference type="CDD" id="cd16964">
    <property type="entry name" value="YqgF"/>
    <property type="match status" value="1"/>
</dbReference>
<dbReference type="Gene3D" id="3.30.420.140">
    <property type="entry name" value="YqgF/RNase H-like domain"/>
    <property type="match status" value="1"/>
</dbReference>
<dbReference type="HAMAP" id="MF_00651">
    <property type="entry name" value="Nuclease_YqgF"/>
    <property type="match status" value="1"/>
</dbReference>
<dbReference type="InterPro" id="IPR012337">
    <property type="entry name" value="RNaseH-like_sf"/>
</dbReference>
<dbReference type="InterPro" id="IPR005227">
    <property type="entry name" value="YqgF"/>
</dbReference>
<dbReference type="InterPro" id="IPR006641">
    <property type="entry name" value="YqgF/RNaseH-like_dom"/>
</dbReference>
<dbReference type="InterPro" id="IPR037027">
    <property type="entry name" value="YqgF/RNaseH-like_dom_sf"/>
</dbReference>
<dbReference type="NCBIfam" id="TIGR00250">
    <property type="entry name" value="RNAse_H_YqgF"/>
    <property type="match status" value="1"/>
</dbReference>
<dbReference type="PANTHER" id="PTHR33317">
    <property type="entry name" value="POLYNUCLEOTIDYL TRANSFERASE, RIBONUCLEASE H-LIKE SUPERFAMILY PROTEIN"/>
    <property type="match status" value="1"/>
</dbReference>
<dbReference type="PANTHER" id="PTHR33317:SF4">
    <property type="entry name" value="POLYNUCLEOTIDYL TRANSFERASE, RIBONUCLEASE H-LIKE SUPERFAMILY PROTEIN"/>
    <property type="match status" value="1"/>
</dbReference>
<dbReference type="Pfam" id="PF03652">
    <property type="entry name" value="RuvX"/>
    <property type="match status" value="1"/>
</dbReference>
<dbReference type="SMART" id="SM00732">
    <property type="entry name" value="YqgFc"/>
    <property type="match status" value="1"/>
</dbReference>
<dbReference type="SUPFAM" id="SSF53098">
    <property type="entry name" value="Ribonuclease H-like"/>
    <property type="match status" value="1"/>
</dbReference>